<evidence type="ECO:0000255" key="1">
    <source>
        <dbReference type="HAMAP-Rule" id="MF_00713"/>
    </source>
</evidence>
<evidence type="ECO:0000305" key="2"/>
<name>GCSPB_LISMF</name>
<dbReference type="EC" id="1.4.4.2" evidence="1"/>
<dbReference type="EMBL" id="AE017262">
    <property type="protein sequence ID" value="AAT04142.1"/>
    <property type="status" value="ALT_INIT"/>
    <property type="molecule type" value="Genomic_DNA"/>
</dbReference>
<dbReference type="RefSeq" id="WP_003726158.1">
    <property type="nucleotide sequence ID" value="NC_002973.6"/>
</dbReference>
<dbReference type="SMR" id="Q71ZX2"/>
<dbReference type="KEGG" id="lmf:LMOf2365_1367"/>
<dbReference type="HOGENOM" id="CLU_004620_5_0_9"/>
<dbReference type="GO" id="GO:0005829">
    <property type="term" value="C:cytosol"/>
    <property type="evidence" value="ECO:0007669"/>
    <property type="project" value="TreeGrafter"/>
</dbReference>
<dbReference type="GO" id="GO:0005960">
    <property type="term" value="C:glycine cleavage complex"/>
    <property type="evidence" value="ECO:0007669"/>
    <property type="project" value="TreeGrafter"/>
</dbReference>
<dbReference type="GO" id="GO:0016594">
    <property type="term" value="F:glycine binding"/>
    <property type="evidence" value="ECO:0007669"/>
    <property type="project" value="TreeGrafter"/>
</dbReference>
<dbReference type="GO" id="GO:0004375">
    <property type="term" value="F:glycine dehydrogenase (decarboxylating) activity"/>
    <property type="evidence" value="ECO:0007669"/>
    <property type="project" value="UniProtKB-EC"/>
</dbReference>
<dbReference type="GO" id="GO:0030170">
    <property type="term" value="F:pyridoxal phosphate binding"/>
    <property type="evidence" value="ECO:0007669"/>
    <property type="project" value="TreeGrafter"/>
</dbReference>
<dbReference type="GO" id="GO:0019464">
    <property type="term" value="P:glycine decarboxylation via glycine cleavage system"/>
    <property type="evidence" value="ECO:0007669"/>
    <property type="project" value="UniProtKB-UniRule"/>
</dbReference>
<dbReference type="CDD" id="cd00613">
    <property type="entry name" value="GDC-P"/>
    <property type="match status" value="1"/>
</dbReference>
<dbReference type="FunFam" id="3.40.640.10:FF:000034">
    <property type="entry name" value="Probable glycine dehydrogenase (decarboxylating) subunit 2"/>
    <property type="match status" value="1"/>
</dbReference>
<dbReference type="FunFam" id="3.90.1150.10:FF:000014">
    <property type="entry name" value="Probable glycine dehydrogenase (decarboxylating) subunit 2"/>
    <property type="match status" value="1"/>
</dbReference>
<dbReference type="Gene3D" id="6.20.440.10">
    <property type="match status" value="1"/>
</dbReference>
<dbReference type="Gene3D" id="3.90.1150.10">
    <property type="entry name" value="Aspartate Aminotransferase, domain 1"/>
    <property type="match status" value="1"/>
</dbReference>
<dbReference type="Gene3D" id="3.40.640.10">
    <property type="entry name" value="Type I PLP-dependent aspartate aminotransferase-like (Major domain)"/>
    <property type="match status" value="1"/>
</dbReference>
<dbReference type="HAMAP" id="MF_00713">
    <property type="entry name" value="GcvPB"/>
    <property type="match status" value="1"/>
</dbReference>
<dbReference type="InterPro" id="IPR023012">
    <property type="entry name" value="GcvPB"/>
</dbReference>
<dbReference type="InterPro" id="IPR049316">
    <property type="entry name" value="GDC-P_C"/>
</dbReference>
<dbReference type="InterPro" id="IPR049315">
    <property type="entry name" value="GDC-P_N"/>
</dbReference>
<dbReference type="InterPro" id="IPR020581">
    <property type="entry name" value="GDC_P"/>
</dbReference>
<dbReference type="InterPro" id="IPR015424">
    <property type="entry name" value="PyrdxlP-dep_Trfase"/>
</dbReference>
<dbReference type="InterPro" id="IPR015421">
    <property type="entry name" value="PyrdxlP-dep_Trfase_major"/>
</dbReference>
<dbReference type="InterPro" id="IPR015422">
    <property type="entry name" value="PyrdxlP-dep_Trfase_small"/>
</dbReference>
<dbReference type="NCBIfam" id="NF003346">
    <property type="entry name" value="PRK04366.1"/>
    <property type="match status" value="1"/>
</dbReference>
<dbReference type="PANTHER" id="PTHR11773:SF1">
    <property type="entry name" value="GLYCINE DEHYDROGENASE (DECARBOXYLATING), MITOCHONDRIAL"/>
    <property type="match status" value="1"/>
</dbReference>
<dbReference type="PANTHER" id="PTHR11773">
    <property type="entry name" value="GLYCINE DEHYDROGENASE, DECARBOXYLATING"/>
    <property type="match status" value="1"/>
</dbReference>
<dbReference type="Pfam" id="PF21478">
    <property type="entry name" value="GcvP2_C"/>
    <property type="match status" value="1"/>
</dbReference>
<dbReference type="Pfam" id="PF02347">
    <property type="entry name" value="GDC-P"/>
    <property type="match status" value="1"/>
</dbReference>
<dbReference type="SUPFAM" id="SSF53383">
    <property type="entry name" value="PLP-dependent transferases"/>
    <property type="match status" value="1"/>
</dbReference>
<keyword id="KW-0560">Oxidoreductase</keyword>
<keyword id="KW-0663">Pyridoxal phosphate</keyword>
<sequence>MNLEETMPLVFERSIPGRIGFSLPESDVPETKASDYFEQAYIRSVPADLPELSELEIMRHYTNLSNHNFGVDSGFYPLGSCTMKYNPKINEKVARFPGFANIHPNQPESSVQGALELLYDLQTSLVEITGMDEVTLQPAAGAHGEWTGLMLIRAFHEKNGDTKRTKVIIPDSAHGTNPASAAVAGFDVVTVKSNEKGLVDVADLKKVVGEDTAALMLTNPNTLGLFEKDIVEMAEIVHEAGGKLYYDGANLNAIMAKVRPGDMGFDVVHLNLHKTFTGPHGGGGPGSGPIGVKKELIPFLPTPVLTKKEEGYTFDYNYPDSIGRVKPYYGNFGINVRAYTYIRTMGPDGLKLVTEYAVLNANYMMRKLQEAYDLPFDQVCKHEFVLSGNRQKKLGVRTVDIAKRLLDHNFHPPTVYFPLIVGEAIMIEPTETESKETLDSFIDTMLKIAKEAEENPEIVQEAPHSTYVKRLDETRAARKPILRYQKEV</sequence>
<feature type="chain" id="PRO_0000167006" description="Probable glycine dehydrogenase (decarboxylating) subunit 2">
    <location>
        <begin position="1"/>
        <end position="488"/>
    </location>
</feature>
<feature type="modified residue" description="N6-(pyridoxal phosphate)lysine" evidence="1">
    <location>
        <position position="274"/>
    </location>
</feature>
<reference key="1">
    <citation type="journal article" date="2004" name="Nucleic Acids Res.">
        <title>Whole genome comparisons of serotype 4b and 1/2a strains of the food-borne pathogen Listeria monocytogenes reveal new insights into the core genome components of this species.</title>
        <authorList>
            <person name="Nelson K.E."/>
            <person name="Fouts D.E."/>
            <person name="Mongodin E.F."/>
            <person name="Ravel J."/>
            <person name="DeBoy R.T."/>
            <person name="Kolonay J.F."/>
            <person name="Rasko D.A."/>
            <person name="Angiuoli S.V."/>
            <person name="Gill S.R."/>
            <person name="Paulsen I.T."/>
            <person name="Peterson J.D."/>
            <person name="White O."/>
            <person name="Nelson W.C."/>
            <person name="Nierman W.C."/>
            <person name="Beanan M.J."/>
            <person name="Brinkac L.M."/>
            <person name="Daugherty S.C."/>
            <person name="Dodson R.J."/>
            <person name="Durkin A.S."/>
            <person name="Madupu R."/>
            <person name="Haft D.H."/>
            <person name="Selengut J."/>
            <person name="Van Aken S.E."/>
            <person name="Khouri H.M."/>
            <person name="Fedorova N."/>
            <person name="Forberger H.A."/>
            <person name="Tran B."/>
            <person name="Kathariou S."/>
            <person name="Wonderling L.D."/>
            <person name="Uhlich G.A."/>
            <person name="Bayles D.O."/>
            <person name="Luchansky J.B."/>
            <person name="Fraser C.M."/>
        </authorList>
    </citation>
    <scope>NUCLEOTIDE SEQUENCE [LARGE SCALE GENOMIC DNA]</scope>
    <source>
        <strain>F2365</strain>
    </source>
</reference>
<organism>
    <name type="scientific">Listeria monocytogenes serotype 4b (strain F2365)</name>
    <dbReference type="NCBI Taxonomy" id="265669"/>
    <lineage>
        <taxon>Bacteria</taxon>
        <taxon>Bacillati</taxon>
        <taxon>Bacillota</taxon>
        <taxon>Bacilli</taxon>
        <taxon>Bacillales</taxon>
        <taxon>Listeriaceae</taxon>
        <taxon>Listeria</taxon>
    </lineage>
</organism>
<protein>
    <recommendedName>
        <fullName evidence="1">Probable glycine dehydrogenase (decarboxylating) subunit 2</fullName>
        <ecNumber evidence="1">1.4.4.2</ecNumber>
    </recommendedName>
    <alternativeName>
        <fullName evidence="1">Glycine cleavage system P-protein subunit 2</fullName>
    </alternativeName>
    <alternativeName>
        <fullName evidence="1">Glycine decarboxylase subunit 2</fullName>
    </alternativeName>
    <alternativeName>
        <fullName evidence="1">Glycine dehydrogenase (aminomethyl-transferring) subunit 2</fullName>
    </alternativeName>
</protein>
<accession>Q71ZX2</accession>
<proteinExistence type="inferred from homology"/>
<gene>
    <name evidence="1" type="primary">gcvPB</name>
    <name type="ordered locus">LMOf2365_1367</name>
</gene>
<comment type="function">
    <text evidence="1">The glycine cleavage system catalyzes the degradation of glycine. The P protein binds the alpha-amino group of glycine through its pyridoxal phosphate cofactor; CO(2) is released and the remaining methylamine moiety is then transferred to the lipoamide cofactor of the H protein.</text>
</comment>
<comment type="catalytic activity">
    <reaction evidence="1">
        <text>N(6)-[(R)-lipoyl]-L-lysyl-[glycine-cleavage complex H protein] + glycine + H(+) = N(6)-[(R)-S(8)-aminomethyldihydrolipoyl]-L-lysyl-[glycine-cleavage complex H protein] + CO2</text>
        <dbReference type="Rhea" id="RHEA:24304"/>
        <dbReference type="Rhea" id="RHEA-COMP:10494"/>
        <dbReference type="Rhea" id="RHEA-COMP:10495"/>
        <dbReference type="ChEBI" id="CHEBI:15378"/>
        <dbReference type="ChEBI" id="CHEBI:16526"/>
        <dbReference type="ChEBI" id="CHEBI:57305"/>
        <dbReference type="ChEBI" id="CHEBI:83099"/>
        <dbReference type="ChEBI" id="CHEBI:83143"/>
        <dbReference type="EC" id="1.4.4.2"/>
    </reaction>
</comment>
<comment type="cofactor">
    <cofactor evidence="1">
        <name>pyridoxal 5'-phosphate</name>
        <dbReference type="ChEBI" id="CHEBI:597326"/>
    </cofactor>
</comment>
<comment type="subunit">
    <text evidence="1">The glycine cleavage system is composed of four proteins: P, T, L and H. In this organism, the P 'protein' is a heterodimer of two subunits.</text>
</comment>
<comment type="similarity">
    <text evidence="1">Belongs to the GcvP family. C-terminal subunit subfamily.</text>
</comment>
<comment type="sequence caution" evidence="2">
    <conflict type="erroneous initiation">
        <sequence resource="EMBL-CDS" id="AAT04142"/>
    </conflict>
</comment>